<comment type="function">
    <text evidence="1">Antitoxin component of a type II toxin-antitoxin (TA) system. Upon expression in M.smegmatis neutralizes the effect of cognate toxin VapC31.</text>
</comment>
<comment type="induction">
    <text evidence="2">Induced in persister cells in response to D-cycloserine.</text>
</comment>
<reference key="1">
    <citation type="journal article" date="1998" name="Nature">
        <title>Deciphering the biology of Mycobacterium tuberculosis from the complete genome sequence.</title>
        <authorList>
            <person name="Cole S.T."/>
            <person name="Brosch R."/>
            <person name="Parkhill J."/>
            <person name="Garnier T."/>
            <person name="Churcher C.M."/>
            <person name="Harris D.E."/>
            <person name="Gordon S.V."/>
            <person name="Eiglmeier K."/>
            <person name="Gas S."/>
            <person name="Barry C.E. III"/>
            <person name="Tekaia F."/>
            <person name="Badcock K."/>
            <person name="Basham D."/>
            <person name="Brown D."/>
            <person name="Chillingworth T."/>
            <person name="Connor R."/>
            <person name="Davies R.M."/>
            <person name="Devlin K."/>
            <person name="Feltwell T."/>
            <person name="Gentles S."/>
            <person name="Hamlin N."/>
            <person name="Holroyd S."/>
            <person name="Hornsby T."/>
            <person name="Jagels K."/>
            <person name="Krogh A."/>
            <person name="McLean J."/>
            <person name="Moule S."/>
            <person name="Murphy L.D."/>
            <person name="Oliver S."/>
            <person name="Osborne J."/>
            <person name="Quail M.A."/>
            <person name="Rajandream M.A."/>
            <person name="Rogers J."/>
            <person name="Rutter S."/>
            <person name="Seeger K."/>
            <person name="Skelton S."/>
            <person name="Squares S."/>
            <person name="Squares R."/>
            <person name="Sulston J.E."/>
            <person name="Taylor K."/>
            <person name="Whitehead S."/>
            <person name="Barrell B.G."/>
        </authorList>
    </citation>
    <scope>NUCLEOTIDE SEQUENCE [LARGE SCALE GENOMIC DNA]</scope>
    <source>
        <strain>ATCC 25618 / H37Rv</strain>
    </source>
</reference>
<reference key="2">
    <citation type="journal article" date="2009" name="PLoS Genet.">
        <title>Comprehensive functional analysis of Mycobacterium tuberculosis toxin-antitoxin systems: implications for pathogenesis, stress responses, and evolution.</title>
        <authorList>
            <person name="Ramage H.R."/>
            <person name="Connolly L.E."/>
            <person name="Cox J.S."/>
        </authorList>
    </citation>
    <scope>EXPRESSION IN M.SMEGMATIS</scope>
    <scope>FUNCTION AS AN ANTITOXIN</scope>
    <source>
        <strain>ATCC 35801 / TMC 107 / Erdman</strain>
    </source>
</reference>
<reference key="3">
    <citation type="journal article" date="2011" name="MBio">
        <title>Characterization and transcriptome analysis of Mycobacterium tuberculosis persisters.</title>
        <authorList>
            <person name="Keren I."/>
            <person name="Minami S."/>
            <person name="Rubin E."/>
            <person name="Lewis K."/>
        </authorList>
    </citation>
    <scope>INDUCTION IN PERSISTER CELLS</scope>
    <source>
        <strain>ATCC 25618 / H37Rv</strain>
    </source>
</reference>
<reference key="4">
    <citation type="journal article" date="2011" name="Mol. Cell. Proteomics">
        <title>Proteogenomic analysis of Mycobacterium tuberculosis by high resolution mass spectrometry.</title>
        <authorList>
            <person name="Kelkar D.S."/>
            <person name="Kumar D."/>
            <person name="Kumar P."/>
            <person name="Balakrishnan L."/>
            <person name="Muthusamy B."/>
            <person name="Yadav A.K."/>
            <person name="Shrivastava P."/>
            <person name="Marimuthu A."/>
            <person name="Anand S."/>
            <person name="Sundaram H."/>
            <person name="Kingsbury R."/>
            <person name="Harsha H.C."/>
            <person name="Nair B."/>
            <person name="Prasad T.S."/>
            <person name="Chauhan D.S."/>
            <person name="Katoch K."/>
            <person name="Katoch V.M."/>
            <person name="Kumar P."/>
            <person name="Chaerkady R."/>
            <person name="Ramachandran S."/>
            <person name="Dash D."/>
            <person name="Pandey A."/>
        </authorList>
    </citation>
    <scope>IDENTIFICATION BY MASS SPECTROMETRY [LARGE SCALE ANALYSIS]</scope>
    <source>
        <strain>ATCC 25618 / H37Rv</strain>
    </source>
</reference>
<organism>
    <name type="scientific">Mycobacterium tuberculosis (strain ATCC 25618 / H37Rv)</name>
    <dbReference type="NCBI Taxonomy" id="83332"/>
    <lineage>
        <taxon>Bacteria</taxon>
        <taxon>Bacillati</taxon>
        <taxon>Actinomycetota</taxon>
        <taxon>Actinomycetes</taxon>
        <taxon>Mycobacteriales</taxon>
        <taxon>Mycobacteriaceae</taxon>
        <taxon>Mycobacterium</taxon>
        <taxon>Mycobacterium tuberculosis complex</taxon>
    </lineage>
</organism>
<gene>
    <name type="primary">vapB31</name>
    <name type="ordered locus">Rv0748</name>
</gene>
<evidence type="ECO:0000269" key="1">
    <source>
    </source>
</evidence>
<evidence type="ECO:0000269" key="2">
    <source>
    </source>
</evidence>
<protein>
    <recommendedName>
        <fullName>Antitoxin VapB31</fullName>
    </recommendedName>
</protein>
<sequence>MRTTVSISDEILAAAKRRARERGQSLGAVIEDALRREFAAAHVGGARPTVPVFDGGTGPRRGIDLTSNRALSEVLDEGLELNSRK</sequence>
<accession>O53811</accession>
<accession>L0T7D3</accession>
<name>VPB31_MYCTU</name>
<proteinExistence type="evidence at protein level"/>
<dbReference type="EMBL" id="AL123456">
    <property type="protein sequence ID" value="CCP43493.1"/>
    <property type="molecule type" value="Genomic_DNA"/>
</dbReference>
<dbReference type="PIR" id="G70824">
    <property type="entry name" value="G70824"/>
</dbReference>
<dbReference type="RefSeq" id="NP_215262.1">
    <property type="nucleotide sequence ID" value="NC_000962.3"/>
</dbReference>
<dbReference type="RefSeq" id="WP_003403834.1">
    <property type="nucleotide sequence ID" value="NZ_NVQJ01000035.1"/>
</dbReference>
<dbReference type="SMR" id="O53811"/>
<dbReference type="STRING" id="83332.Rv0748"/>
<dbReference type="PaxDb" id="83332-Rv0748"/>
<dbReference type="GeneID" id="888682"/>
<dbReference type="KEGG" id="mtu:Rv0748"/>
<dbReference type="KEGG" id="mtv:RVBD_0748"/>
<dbReference type="TubercuList" id="Rv0748"/>
<dbReference type="eggNOG" id="ENOG502ZIAU">
    <property type="taxonomic scope" value="Bacteria"/>
</dbReference>
<dbReference type="InParanoid" id="O53811"/>
<dbReference type="OrthoDB" id="9813767at2"/>
<dbReference type="PhylomeDB" id="O53811"/>
<dbReference type="Proteomes" id="UP000001584">
    <property type="component" value="Chromosome"/>
</dbReference>
<dbReference type="GO" id="GO:0045927">
    <property type="term" value="P:positive regulation of growth"/>
    <property type="evidence" value="ECO:0000315"/>
    <property type="project" value="MTBBASE"/>
</dbReference>
<dbReference type="GO" id="GO:0006355">
    <property type="term" value="P:regulation of DNA-templated transcription"/>
    <property type="evidence" value="ECO:0007669"/>
    <property type="project" value="InterPro"/>
</dbReference>
<dbReference type="InterPro" id="IPR002145">
    <property type="entry name" value="CopG"/>
</dbReference>
<dbReference type="Pfam" id="PF01402">
    <property type="entry name" value="RHH_1"/>
    <property type="match status" value="1"/>
</dbReference>
<keyword id="KW-1185">Reference proteome</keyword>
<keyword id="KW-1277">Toxin-antitoxin system</keyword>
<feature type="chain" id="PRO_0000408075" description="Antitoxin VapB31">
    <location>
        <begin position="1"/>
        <end position="85"/>
    </location>
</feature>